<accession>Q9JYT7</accession>
<sequence length="233" mass="25898">MSARENILAKLKKADALPMEEPAVFDYYREMGVSWGSEVERLKHWAAAMRAVKTEIYWVTKSNWMQVFREAAEGKGLKNILLPLATEHGQIARAALADSNIEPIAFEREIDTWKTEFFTNIDAGFSGAQCGIARTGTLMLFSSPEEPRTLSLVPPVHFCLFDTSKMYNEFHNAVEGEKLVENGMPTNVFLISGPSKTADIQLTLAYGAHGPRDLVILAILPDHISPADLEENA</sequence>
<evidence type="ECO:0000305" key="1"/>
<keyword id="KW-1185">Reference proteome</keyword>
<organism>
    <name type="scientific">Neisseria meningitidis serogroup B (strain ATCC BAA-335 / MC58)</name>
    <dbReference type="NCBI Taxonomy" id="122586"/>
    <lineage>
        <taxon>Bacteria</taxon>
        <taxon>Pseudomonadati</taxon>
        <taxon>Pseudomonadota</taxon>
        <taxon>Betaproteobacteria</taxon>
        <taxon>Neisseriales</taxon>
        <taxon>Neisseriaceae</taxon>
        <taxon>Neisseria</taxon>
    </lineage>
</organism>
<dbReference type="EMBL" id="AE002098">
    <property type="protein sequence ID" value="AAF41798.1"/>
    <property type="molecule type" value="Genomic_DNA"/>
</dbReference>
<dbReference type="PIR" id="E81083">
    <property type="entry name" value="E81083"/>
</dbReference>
<dbReference type="RefSeq" id="NP_274449.1">
    <property type="nucleotide sequence ID" value="NC_003112.2"/>
</dbReference>
<dbReference type="RefSeq" id="WP_002216938.1">
    <property type="nucleotide sequence ID" value="NC_003112.2"/>
</dbReference>
<dbReference type="SMR" id="Q9JYT7"/>
<dbReference type="STRING" id="122586.NMB1437"/>
<dbReference type="PaxDb" id="122586-NMB1437"/>
<dbReference type="KEGG" id="nme:NMB1437"/>
<dbReference type="PATRIC" id="fig|122586.8.peg.1805"/>
<dbReference type="HOGENOM" id="CLU_090664_1_2_4"/>
<dbReference type="InParanoid" id="Q9JYT7"/>
<dbReference type="OrthoDB" id="9794157at2"/>
<dbReference type="Proteomes" id="UP000000425">
    <property type="component" value="Chromosome"/>
</dbReference>
<dbReference type="Gene3D" id="3.40.50.10420">
    <property type="entry name" value="NagB/RpiA/CoA transferase-like"/>
    <property type="match status" value="1"/>
</dbReference>
<dbReference type="InterPro" id="IPR024185">
    <property type="entry name" value="FTHF_cligase-like_sf"/>
</dbReference>
<dbReference type="InterPro" id="IPR003741">
    <property type="entry name" value="LUD_dom"/>
</dbReference>
<dbReference type="InterPro" id="IPR037171">
    <property type="entry name" value="NagB/RpiA_transferase-like"/>
</dbReference>
<dbReference type="PANTHER" id="PTHR43682">
    <property type="entry name" value="LACTATE UTILIZATION PROTEIN C"/>
    <property type="match status" value="1"/>
</dbReference>
<dbReference type="PANTHER" id="PTHR43682:SF1">
    <property type="entry name" value="LACTATE UTILIZATION PROTEIN C"/>
    <property type="match status" value="1"/>
</dbReference>
<dbReference type="Pfam" id="PF02589">
    <property type="entry name" value="LUD_dom"/>
    <property type="match status" value="1"/>
</dbReference>
<dbReference type="SUPFAM" id="SSF100950">
    <property type="entry name" value="NagB/RpiA/CoA transferase-like"/>
    <property type="match status" value="1"/>
</dbReference>
<proteinExistence type="evidence at protein level"/>
<gene>
    <name type="ordered locus">NMB1437</name>
</gene>
<name>Y1437_NEIMB</name>
<feature type="chain" id="PRO_0000320335" description="Uncharacterized protein NMB1437">
    <location>
        <begin position="1"/>
        <end position="233"/>
    </location>
</feature>
<comment type="miscellaneous">
    <text>Present in outer membrane vesicle formulations which are used as vaccines in human.</text>
</comment>
<comment type="similarity">
    <text evidence="1">Belongs to the LutC/YkgG family.</text>
</comment>
<protein>
    <recommendedName>
        <fullName>Uncharacterized protein NMB1437</fullName>
    </recommendedName>
</protein>
<reference key="1">
    <citation type="journal article" date="2000" name="Science">
        <title>Complete genome sequence of Neisseria meningitidis serogroup B strain MC58.</title>
        <authorList>
            <person name="Tettelin H."/>
            <person name="Saunders N.J."/>
            <person name="Heidelberg J.F."/>
            <person name="Jeffries A.C."/>
            <person name="Nelson K.E."/>
            <person name="Eisen J.A."/>
            <person name="Ketchum K.A."/>
            <person name="Hood D.W."/>
            <person name="Peden J.F."/>
            <person name="Dodson R.J."/>
            <person name="Nelson W.C."/>
            <person name="Gwinn M.L."/>
            <person name="DeBoy R.T."/>
            <person name="Peterson J.D."/>
            <person name="Hickey E.K."/>
            <person name="Haft D.H."/>
            <person name="Salzberg S.L."/>
            <person name="White O."/>
            <person name="Fleischmann R.D."/>
            <person name="Dougherty B.A."/>
            <person name="Mason T.M."/>
            <person name="Ciecko A."/>
            <person name="Parksey D.S."/>
            <person name="Blair E."/>
            <person name="Cittone H."/>
            <person name="Clark E.B."/>
            <person name="Cotton M.D."/>
            <person name="Utterback T.R."/>
            <person name="Khouri H.M."/>
            <person name="Qin H."/>
            <person name="Vamathevan J.J."/>
            <person name="Gill J."/>
            <person name="Scarlato V."/>
            <person name="Masignani V."/>
            <person name="Pizza M."/>
            <person name="Grandi G."/>
            <person name="Sun L."/>
            <person name="Smith H.O."/>
            <person name="Fraser C.M."/>
            <person name="Moxon E.R."/>
            <person name="Rappuoli R."/>
            <person name="Venter J.C."/>
        </authorList>
    </citation>
    <scope>NUCLEOTIDE SEQUENCE [LARGE SCALE GENOMIC DNA]</scope>
    <source>
        <strain>ATCC BAA-335 / MC58</strain>
    </source>
</reference>
<reference key="2">
    <citation type="journal article" date="2006" name="Proteomics">
        <title>Proteomic analysis of a meningococcal outer membrane vesicle vaccine prepared from the group B strain NZ98/254.</title>
        <authorList>
            <person name="Vipond C."/>
            <person name="Suker J."/>
            <person name="Jones C."/>
            <person name="Tang C."/>
            <person name="Feavers I.M."/>
            <person name="Wheeler J.X."/>
        </authorList>
    </citation>
    <scope>IDENTIFICATION BY MASS SPECTROMETRY [LARGE SCALE ANALYSIS]</scope>
    <source>
        <strain>NZ98/254 / Serogroup B</strain>
    </source>
</reference>